<name>THIE_AZOSB</name>
<keyword id="KW-0460">Magnesium</keyword>
<keyword id="KW-0479">Metal-binding</keyword>
<keyword id="KW-1185">Reference proteome</keyword>
<keyword id="KW-0784">Thiamine biosynthesis</keyword>
<keyword id="KW-0808">Transferase</keyword>
<sequence length="206" mass="21204">MGERIRGLYLVTPDAADSATLLASVERVLPARPALLQYRNKLADPLRQLDEARSLRQLCSSAGVPLIINDDVALARAVAADGVHLGRDDGSPAAARAVLGADALIGVSCYDEWVRAEDAAAAGADYVAFGAMFPSSTKPGAVRAPLTLLTRARAALDCPVAAIGGITLDNAPALIEAGADLLAVISDVFAAADPLQRALAYSALFA</sequence>
<dbReference type="EC" id="2.5.1.3" evidence="1"/>
<dbReference type="EMBL" id="AM406670">
    <property type="protein sequence ID" value="CAL96066.1"/>
    <property type="molecule type" value="Genomic_DNA"/>
</dbReference>
<dbReference type="RefSeq" id="WP_011767172.1">
    <property type="nucleotide sequence ID" value="NC_008702.1"/>
</dbReference>
<dbReference type="SMR" id="A1KB60"/>
<dbReference type="STRING" id="62928.azo3450"/>
<dbReference type="KEGG" id="azo:azo3450"/>
<dbReference type="eggNOG" id="COG0352">
    <property type="taxonomic scope" value="Bacteria"/>
</dbReference>
<dbReference type="HOGENOM" id="CLU_018272_3_1_4"/>
<dbReference type="UniPathway" id="UPA00060">
    <property type="reaction ID" value="UER00141"/>
</dbReference>
<dbReference type="Proteomes" id="UP000002588">
    <property type="component" value="Chromosome"/>
</dbReference>
<dbReference type="GO" id="GO:0005737">
    <property type="term" value="C:cytoplasm"/>
    <property type="evidence" value="ECO:0007669"/>
    <property type="project" value="TreeGrafter"/>
</dbReference>
<dbReference type="GO" id="GO:0000287">
    <property type="term" value="F:magnesium ion binding"/>
    <property type="evidence" value="ECO:0007669"/>
    <property type="project" value="UniProtKB-UniRule"/>
</dbReference>
<dbReference type="GO" id="GO:0004789">
    <property type="term" value="F:thiamine-phosphate diphosphorylase activity"/>
    <property type="evidence" value="ECO:0007669"/>
    <property type="project" value="UniProtKB-UniRule"/>
</dbReference>
<dbReference type="GO" id="GO:0009228">
    <property type="term" value="P:thiamine biosynthetic process"/>
    <property type="evidence" value="ECO:0007669"/>
    <property type="project" value="UniProtKB-KW"/>
</dbReference>
<dbReference type="GO" id="GO:0009229">
    <property type="term" value="P:thiamine diphosphate biosynthetic process"/>
    <property type="evidence" value="ECO:0007669"/>
    <property type="project" value="UniProtKB-UniRule"/>
</dbReference>
<dbReference type="CDD" id="cd00564">
    <property type="entry name" value="TMP_TenI"/>
    <property type="match status" value="1"/>
</dbReference>
<dbReference type="Gene3D" id="3.20.20.70">
    <property type="entry name" value="Aldolase class I"/>
    <property type="match status" value="1"/>
</dbReference>
<dbReference type="HAMAP" id="MF_00097">
    <property type="entry name" value="TMP_synthase"/>
    <property type="match status" value="1"/>
</dbReference>
<dbReference type="InterPro" id="IPR013785">
    <property type="entry name" value="Aldolase_TIM"/>
</dbReference>
<dbReference type="InterPro" id="IPR036206">
    <property type="entry name" value="ThiamineP_synth_sf"/>
</dbReference>
<dbReference type="InterPro" id="IPR022998">
    <property type="entry name" value="ThiamineP_synth_TenI"/>
</dbReference>
<dbReference type="InterPro" id="IPR034291">
    <property type="entry name" value="TMP_synthase"/>
</dbReference>
<dbReference type="NCBIfam" id="TIGR00693">
    <property type="entry name" value="thiE"/>
    <property type="match status" value="1"/>
</dbReference>
<dbReference type="PANTHER" id="PTHR20857">
    <property type="entry name" value="THIAMINE-PHOSPHATE PYROPHOSPHORYLASE"/>
    <property type="match status" value="1"/>
</dbReference>
<dbReference type="PANTHER" id="PTHR20857:SF15">
    <property type="entry name" value="THIAMINE-PHOSPHATE SYNTHASE"/>
    <property type="match status" value="1"/>
</dbReference>
<dbReference type="Pfam" id="PF02581">
    <property type="entry name" value="TMP-TENI"/>
    <property type="match status" value="1"/>
</dbReference>
<dbReference type="SUPFAM" id="SSF51391">
    <property type="entry name" value="Thiamin phosphate synthase"/>
    <property type="match status" value="1"/>
</dbReference>
<gene>
    <name evidence="1" type="primary">thiE</name>
    <name type="ordered locus">azo3450</name>
</gene>
<proteinExistence type="inferred from homology"/>
<accession>A1KB60</accession>
<protein>
    <recommendedName>
        <fullName evidence="1">Thiamine-phosphate synthase</fullName>
        <shortName evidence="1">TP synthase</shortName>
        <shortName evidence="1">TPS</shortName>
        <ecNumber evidence="1">2.5.1.3</ecNumber>
    </recommendedName>
    <alternativeName>
        <fullName evidence="1">Thiamine-phosphate pyrophosphorylase</fullName>
        <shortName evidence="1">TMP pyrophosphorylase</shortName>
        <shortName evidence="1">TMP-PPase</shortName>
    </alternativeName>
</protein>
<organism>
    <name type="scientific">Azoarcus sp. (strain BH72)</name>
    <dbReference type="NCBI Taxonomy" id="418699"/>
    <lineage>
        <taxon>Bacteria</taxon>
        <taxon>Pseudomonadati</taxon>
        <taxon>Pseudomonadota</taxon>
        <taxon>Betaproteobacteria</taxon>
        <taxon>Rhodocyclales</taxon>
        <taxon>Zoogloeaceae</taxon>
        <taxon>Azoarcus</taxon>
    </lineage>
</organism>
<comment type="function">
    <text evidence="1">Condenses 4-methyl-5-(beta-hydroxyethyl)thiazole monophosphate (THZ-P) and 2-methyl-4-amino-5-hydroxymethyl pyrimidine pyrophosphate (HMP-PP) to form thiamine monophosphate (TMP).</text>
</comment>
<comment type="catalytic activity">
    <reaction evidence="1">
        <text>2-[(2R,5Z)-2-carboxy-4-methylthiazol-5(2H)-ylidene]ethyl phosphate + 4-amino-2-methyl-5-(diphosphooxymethyl)pyrimidine + 2 H(+) = thiamine phosphate + CO2 + diphosphate</text>
        <dbReference type="Rhea" id="RHEA:47844"/>
        <dbReference type="ChEBI" id="CHEBI:15378"/>
        <dbReference type="ChEBI" id="CHEBI:16526"/>
        <dbReference type="ChEBI" id="CHEBI:33019"/>
        <dbReference type="ChEBI" id="CHEBI:37575"/>
        <dbReference type="ChEBI" id="CHEBI:57841"/>
        <dbReference type="ChEBI" id="CHEBI:62899"/>
        <dbReference type="EC" id="2.5.1.3"/>
    </reaction>
</comment>
<comment type="catalytic activity">
    <reaction evidence="1">
        <text>2-(2-carboxy-4-methylthiazol-5-yl)ethyl phosphate + 4-amino-2-methyl-5-(diphosphooxymethyl)pyrimidine + 2 H(+) = thiamine phosphate + CO2 + diphosphate</text>
        <dbReference type="Rhea" id="RHEA:47848"/>
        <dbReference type="ChEBI" id="CHEBI:15378"/>
        <dbReference type="ChEBI" id="CHEBI:16526"/>
        <dbReference type="ChEBI" id="CHEBI:33019"/>
        <dbReference type="ChEBI" id="CHEBI:37575"/>
        <dbReference type="ChEBI" id="CHEBI:57841"/>
        <dbReference type="ChEBI" id="CHEBI:62890"/>
        <dbReference type="EC" id="2.5.1.3"/>
    </reaction>
</comment>
<comment type="catalytic activity">
    <reaction evidence="1">
        <text>4-methyl-5-(2-phosphooxyethyl)-thiazole + 4-amino-2-methyl-5-(diphosphooxymethyl)pyrimidine + H(+) = thiamine phosphate + diphosphate</text>
        <dbReference type="Rhea" id="RHEA:22328"/>
        <dbReference type="ChEBI" id="CHEBI:15378"/>
        <dbReference type="ChEBI" id="CHEBI:33019"/>
        <dbReference type="ChEBI" id="CHEBI:37575"/>
        <dbReference type="ChEBI" id="CHEBI:57841"/>
        <dbReference type="ChEBI" id="CHEBI:58296"/>
        <dbReference type="EC" id="2.5.1.3"/>
    </reaction>
</comment>
<comment type="cofactor">
    <cofactor evidence="1">
        <name>Mg(2+)</name>
        <dbReference type="ChEBI" id="CHEBI:18420"/>
    </cofactor>
    <text evidence="1">Binds 1 Mg(2+) ion per subunit.</text>
</comment>
<comment type="pathway">
    <text evidence="1">Cofactor biosynthesis; thiamine diphosphate biosynthesis; thiamine phosphate from 4-amino-2-methyl-5-diphosphomethylpyrimidine and 4-methyl-5-(2-phosphoethyl)-thiazole: step 1/1.</text>
</comment>
<comment type="similarity">
    <text evidence="1">Belongs to the thiamine-phosphate synthase family.</text>
</comment>
<reference key="1">
    <citation type="journal article" date="2006" name="Nat. Biotechnol.">
        <title>Complete genome of the mutualistic, N2-fixing grass endophyte Azoarcus sp. strain BH72.</title>
        <authorList>
            <person name="Krause A."/>
            <person name="Ramakumar A."/>
            <person name="Bartels D."/>
            <person name="Battistoni F."/>
            <person name="Bekel T."/>
            <person name="Boch J."/>
            <person name="Boehm M."/>
            <person name="Friedrich F."/>
            <person name="Hurek T."/>
            <person name="Krause L."/>
            <person name="Linke B."/>
            <person name="McHardy A.C."/>
            <person name="Sarkar A."/>
            <person name="Schneiker S."/>
            <person name="Syed A.A."/>
            <person name="Thauer R."/>
            <person name="Vorhoelter F.-J."/>
            <person name="Weidner S."/>
            <person name="Puehler A."/>
            <person name="Reinhold-Hurek B."/>
            <person name="Kaiser O."/>
            <person name="Goesmann A."/>
        </authorList>
    </citation>
    <scope>NUCLEOTIDE SEQUENCE [LARGE SCALE GENOMIC DNA]</scope>
    <source>
        <strain>BH72</strain>
    </source>
</reference>
<evidence type="ECO:0000255" key="1">
    <source>
        <dbReference type="HAMAP-Rule" id="MF_00097"/>
    </source>
</evidence>
<feature type="chain" id="PRO_1000008121" description="Thiamine-phosphate synthase">
    <location>
        <begin position="1"/>
        <end position="206"/>
    </location>
</feature>
<feature type="binding site" evidence="1">
    <location>
        <begin position="37"/>
        <end position="41"/>
    </location>
    <ligand>
        <name>4-amino-2-methyl-5-(diphosphooxymethyl)pyrimidine</name>
        <dbReference type="ChEBI" id="CHEBI:57841"/>
    </ligand>
</feature>
<feature type="binding site" evidence="1">
    <location>
        <position position="69"/>
    </location>
    <ligand>
        <name>4-amino-2-methyl-5-(diphosphooxymethyl)pyrimidine</name>
        <dbReference type="ChEBI" id="CHEBI:57841"/>
    </ligand>
</feature>
<feature type="binding site" evidence="1">
    <location>
        <position position="70"/>
    </location>
    <ligand>
        <name>Mg(2+)</name>
        <dbReference type="ChEBI" id="CHEBI:18420"/>
    </ligand>
</feature>
<feature type="binding site" evidence="1">
    <location>
        <position position="89"/>
    </location>
    <ligand>
        <name>Mg(2+)</name>
        <dbReference type="ChEBI" id="CHEBI:18420"/>
    </ligand>
</feature>
<feature type="binding site" evidence="1">
    <location>
        <position position="108"/>
    </location>
    <ligand>
        <name>4-amino-2-methyl-5-(diphosphooxymethyl)pyrimidine</name>
        <dbReference type="ChEBI" id="CHEBI:57841"/>
    </ligand>
</feature>
<feature type="binding site" evidence="1">
    <location>
        <begin position="135"/>
        <end position="137"/>
    </location>
    <ligand>
        <name>2-[(2R,5Z)-2-carboxy-4-methylthiazol-5(2H)-ylidene]ethyl phosphate</name>
        <dbReference type="ChEBI" id="CHEBI:62899"/>
    </ligand>
</feature>
<feature type="binding site" evidence="1">
    <location>
        <position position="138"/>
    </location>
    <ligand>
        <name>4-amino-2-methyl-5-(diphosphooxymethyl)pyrimidine</name>
        <dbReference type="ChEBI" id="CHEBI:57841"/>
    </ligand>
</feature>
<feature type="binding site" evidence="1">
    <location>
        <position position="165"/>
    </location>
    <ligand>
        <name>2-[(2R,5Z)-2-carboxy-4-methylthiazol-5(2H)-ylidene]ethyl phosphate</name>
        <dbReference type="ChEBI" id="CHEBI:62899"/>
    </ligand>
</feature>
<feature type="binding site" evidence="1">
    <location>
        <begin position="185"/>
        <end position="186"/>
    </location>
    <ligand>
        <name>2-[(2R,5Z)-2-carboxy-4-methylthiazol-5(2H)-ylidene]ethyl phosphate</name>
        <dbReference type="ChEBI" id="CHEBI:62899"/>
    </ligand>
</feature>